<proteinExistence type="inferred from homology"/>
<name>ACKA_BACCR</name>
<protein>
    <recommendedName>
        <fullName evidence="1">Acetate kinase</fullName>
        <ecNumber evidence="1">2.7.2.1</ecNumber>
    </recommendedName>
    <alternativeName>
        <fullName evidence="1">Acetokinase</fullName>
    </alternativeName>
</protein>
<reference key="1">
    <citation type="journal article" date="2003" name="Nature">
        <title>Genome sequence of Bacillus cereus and comparative analysis with Bacillus anthracis.</title>
        <authorList>
            <person name="Ivanova N."/>
            <person name="Sorokin A."/>
            <person name="Anderson I."/>
            <person name="Galleron N."/>
            <person name="Candelon B."/>
            <person name="Kapatral V."/>
            <person name="Bhattacharyya A."/>
            <person name="Reznik G."/>
            <person name="Mikhailova N."/>
            <person name="Lapidus A."/>
            <person name="Chu L."/>
            <person name="Mazur M."/>
            <person name="Goltsman E."/>
            <person name="Larsen N."/>
            <person name="D'Souza M."/>
            <person name="Walunas T."/>
            <person name="Grechkin Y."/>
            <person name="Pusch G."/>
            <person name="Haselkorn R."/>
            <person name="Fonstein M."/>
            <person name="Ehrlich S.D."/>
            <person name="Overbeek R."/>
            <person name="Kyrpides N.C."/>
        </authorList>
    </citation>
    <scope>NUCLEOTIDE SEQUENCE [LARGE SCALE GENOMIC DNA]</scope>
    <source>
        <strain>ATCC 14579 / DSM 31 / CCUG 7414 / JCM 2152 / NBRC 15305 / NCIMB 9373 / NCTC 2599 / NRRL B-3711</strain>
    </source>
</reference>
<dbReference type="EC" id="2.7.2.1" evidence="1"/>
<dbReference type="EMBL" id="AE016877">
    <property type="protein sequence ID" value="AAP11544.1"/>
    <property type="molecule type" value="Genomic_DNA"/>
</dbReference>
<dbReference type="RefSeq" id="NP_834343.1">
    <property type="nucleotide sequence ID" value="NC_004722.1"/>
</dbReference>
<dbReference type="RefSeq" id="WP_000034575.1">
    <property type="nucleotide sequence ID" value="NZ_CP138336.1"/>
</dbReference>
<dbReference type="SMR" id="Q817C0"/>
<dbReference type="STRING" id="226900.BC_4637"/>
<dbReference type="MetOSite" id="Q817C0"/>
<dbReference type="GeneID" id="67468932"/>
<dbReference type="KEGG" id="bce:BC4637"/>
<dbReference type="PATRIC" id="fig|226900.8.peg.4801"/>
<dbReference type="HOGENOM" id="CLU_020352_0_1_9"/>
<dbReference type="OrthoDB" id="9802453at2"/>
<dbReference type="UniPathway" id="UPA00340">
    <property type="reaction ID" value="UER00458"/>
</dbReference>
<dbReference type="Proteomes" id="UP000001417">
    <property type="component" value="Chromosome"/>
</dbReference>
<dbReference type="GO" id="GO:0005737">
    <property type="term" value="C:cytoplasm"/>
    <property type="evidence" value="ECO:0007669"/>
    <property type="project" value="UniProtKB-SubCell"/>
</dbReference>
<dbReference type="GO" id="GO:0008776">
    <property type="term" value="F:acetate kinase activity"/>
    <property type="evidence" value="ECO:0000318"/>
    <property type="project" value="GO_Central"/>
</dbReference>
<dbReference type="GO" id="GO:0005524">
    <property type="term" value="F:ATP binding"/>
    <property type="evidence" value="ECO:0007669"/>
    <property type="project" value="UniProtKB-KW"/>
</dbReference>
<dbReference type="GO" id="GO:0000287">
    <property type="term" value="F:magnesium ion binding"/>
    <property type="evidence" value="ECO:0007669"/>
    <property type="project" value="UniProtKB-UniRule"/>
</dbReference>
<dbReference type="GO" id="GO:0006083">
    <property type="term" value="P:acetate metabolic process"/>
    <property type="evidence" value="ECO:0000318"/>
    <property type="project" value="GO_Central"/>
</dbReference>
<dbReference type="GO" id="GO:0006085">
    <property type="term" value="P:acetyl-CoA biosynthetic process"/>
    <property type="evidence" value="ECO:0007669"/>
    <property type="project" value="UniProtKB-UniRule"/>
</dbReference>
<dbReference type="CDD" id="cd24010">
    <property type="entry name" value="ASKHA_NBD_AcK_PK"/>
    <property type="match status" value="1"/>
</dbReference>
<dbReference type="Gene3D" id="3.30.420.40">
    <property type="match status" value="2"/>
</dbReference>
<dbReference type="HAMAP" id="MF_00020">
    <property type="entry name" value="Acetate_kinase"/>
    <property type="match status" value="1"/>
</dbReference>
<dbReference type="InterPro" id="IPR004372">
    <property type="entry name" value="Ac/propionate_kinase"/>
</dbReference>
<dbReference type="InterPro" id="IPR000890">
    <property type="entry name" value="Aliphatic_acid_kin_short-chain"/>
</dbReference>
<dbReference type="InterPro" id="IPR023865">
    <property type="entry name" value="Aliphatic_acid_kinase_CS"/>
</dbReference>
<dbReference type="InterPro" id="IPR043129">
    <property type="entry name" value="ATPase_NBD"/>
</dbReference>
<dbReference type="NCBIfam" id="TIGR00016">
    <property type="entry name" value="ackA"/>
    <property type="match status" value="1"/>
</dbReference>
<dbReference type="PANTHER" id="PTHR21060">
    <property type="entry name" value="ACETATE KINASE"/>
    <property type="match status" value="1"/>
</dbReference>
<dbReference type="PANTHER" id="PTHR21060:SF15">
    <property type="entry name" value="ACETATE KINASE-RELATED"/>
    <property type="match status" value="1"/>
</dbReference>
<dbReference type="Pfam" id="PF00871">
    <property type="entry name" value="Acetate_kinase"/>
    <property type="match status" value="1"/>
</dbReference>
<dbReference type="PIRSF" id="PIRSF000722">
    <property type="entry name" value="Acetate_prop_kin"/>
    <property type="match status" value="1"/>
</dbReference>
<dbReference type="PRINTS" id="PR00471">
    <property type="entry name" value="ACETATEKNASE"/>
</dbReference>
<dbReference type="SUPFAM" id="SSF53067">
    <property type="entry name" value="Actin-like ATPase domain"/>
    <property type="match status" value="2"/>
</dbReference>
<dbReference type="PROSITE" id="PS01075">
    <property type="entry name" value="ACETATE_KINASE_1"/>
    <property type="match status" value="1"/>
</dbReference>
<dbReference type="PROSITE" id="PS01076">
    <property type="entry name" value="ACETATE_KINASE_2"/>
    <property type="match status" value="1"/>
</dbReference>
<sequence length="397" mass="43206">MSKIIAINAGSSSLKFQLFEMPSETVLTKGLVERIGLEDSIFTITVDGEKQKEITNIPDHAVAVNMLLKKLTENGIVKSLDEIGGIGHRVVHGGEKFADSVLITDEVLADIEELSDLAPLHNPANVVGIKAFQEVLPNVPAVAVFDTAFHQTMPESAFLYSLPYEYYEKFGIRKYGFHGTSHKYVTERAAELLGRPIESLSLLSCHLGNGASIAAVEGGKSIDTSMGFTPLAGVTMGTRSGNLDPALIPYIMEKTGQTVEEVVNVLNKKSGMLGLTGYSSDLRDIIAKEEEGDHRAKVALDVFVSRIHKYIGSYTARMKGVDAIIFTAGVGENSAIIRERVLEGLEYMGVYFDAKRNNVFGEEAFISFPHSPVKIIVIPTDEEVMIARDVLRLGDIG</sequence>
<comment type="function">
    <text evidence="1">Catalyzes the formation of acetyl phosphate from acetate and ATP. Can also catalyze the reverse reaction.</text>
</comment>
<comment type="catalytic activity">
    <reaction evidence="1">
        <text>acetate + ATP = acetyl phosphate + ADP</text>
        <dbReference type="Rhea" id="RHEA:11352"/>
        <dbReference type="ChEBI" id="CHEBI:22191"/>
        <dbReference type="ChEBI" id="CHEBI:30089"/>
        <dbReference type="ChEBI" id="CHEBI:30616"/>
        <dbReference type="ChEBI" id="CHEBI:456216"/>
        <dbReference type="EC" id="2.7.2.1"/>
    </reaction>
</comment>
<comment type="cofactor">
    <cofactor evidence="1">
        <name>Mg(2+)</name>
        <dbReference type="ChEBI" id="CHEBI:18420"/>
    </cofactor>
    <cofactor evidence="1">
        <name>Mn(2+)</name>
        <dbReference type="ChEBI" id="CHEBI:29035"/>
    </cofactor>
    <text evidence="1">Mg(2+). Can also accept Mn(2+).</text>
</comment>
<comment type="pathway">
    <text evidence="1">Metabolic intermediate biosynthesis; acetyl-CoA biosynthesis; acetyl-CoA from acetate: step 1/2.</text>
</comment>
<comment type="subunit">
    <text evidence="1">Homodimer.</text>
</comment>
<comment type="subcellular location">
    <subcellularLocation>
        <location evidence="1">Cytoplasm</location>
    </subcellularLocation>
</comment>
<comment type="similarity">
    <text evidence="1">Belongs to the acetokinase family.</text>
</comment>
<feature type="chain" id="PRO_0000107527" description="Acetate kinase">
    <location>
        <begin position="1"/>
        <end position="397"/>
    </location>
</feature>
<feature type="active site" description="Proton donor/acceptor" evidence="1">
    <location>
        <position position="146"/>
    </location>
</feature>
<feature type="binding site" evidence="1">
    <location>
        <position position="8"/>
    </location>
    <ligand>
        <name>Mg(2+)</name>
        <dbReference type="ChEBI" id="CHEBI:18420"/>
    </ligand>
</feature>
<feature type="binding site" evidence="1">
    <location>
        <position position="15"/>
    </location>
    <ligand>
        <name>ATP</name>
        <dbReference type="ChEBI" id="CHEBI:30616"/>
    </ligand>
</feature>
<feature type="binding site" evidence="1">
    <location>
        <position position="89"/>
    </location>
    <ligand>
        <name>substrate</name>
    </ligand>
</feature>
<feature type="binding site" evidence="1">
    <location>
        <begin position="206"/>
        <end position="210"/>
    </location>
    <ligand>
        <name>ATP</name>
        <dbReference type="ChEBI" id="CHEBI:30616"/>
    </ligand>
</feature>
<feature type="binding site" evidence="1">
    <location>
        <begin position="281"/>
        <end position="283"/>
    </location>
    <ligand>
        <name>ATP</name>
        <dbReference type="ChEBI" id="CHEBI:30616"/>
    </ligand>
</feature>
<feature type="binding site" evidence="1">
    <location>
        <begin position="329"/>
        <end position="333"/>
    </location>
    <ligand>
        <name>ATP</name>
        <dbReference type="ChEBI" id="CHEBI:30616"/>
    </ligand>
</feature>
<feature type="binding site" evidence="1">
    <location>
        <position position="382"/>
    </location>
    <ligand>
        <name>Mg(2+)</name>
        <dbReference type="ChEBI" id="CHEBI:18420"/>
    </ligand>
</feature>
<feature type="site" description="Transition state stabilizer" evidence="1">
    <location>
        <position position="178"/>
    </location>
</feature>
<feature type="site" description="Transition state stabilizer" evidence="1">
    <location>
        <position position="239"/>
    </location>
</feature>
<evidence type="ECO:0000255" key="1">
    <source>
        <dbReference type="HAMAP-Rule" id="MF_00020"/>
    </source>
</evidence>
<gene>
    <name evidence="1" type="primary">ackA</name>
    <name type="ordered locus">BC_4637</name>
</gene>
<keyword id="KW-0067">ATP-binding</keyword>
<keyword id="KW-0963">Cytoplasm</keyword>
<keyword id="KW-0418">Kinase</keyword>
<keyword id="KW-0460">Magnesium</keyword>
<keyword id="KW-0479">Metal-binding</keyword>
<keyword id="KW-0547">Nucleotide-binding</keyword>
<keyword id="KW-1185">Reference proteome</keyword>
<keyword id="KW-0808">Transferase</keyword>
<accession>Q817C0</accession>
<organism>
    <name type="scientific">Bacillus cereus (strain ATCC 14579 / DSM 31 / CCUG 7414 / JCM 2152 / NBRC 15305 / NCIMB 9373 / NCTC 2599 / NRRL B-3711)</name>
    <dbReference type="NCBI Taxonomy" id="226900"/>
    <lineage>
        <taxon>Bacteria</taxon>
        <taxon>Bacillati</taxon>
        <taxon>Bacillota</taxon>
        <taxon>Bacilli</taxon>
        <taxon>Bacillales</taxon>
        <taxon>Bacillaceae</taxon>
        <taxon>Bacillus</taxon>
        <taxon>Bacillus cereus group</taxon>
    </lineage>
</organism>